<reference key="1">
    <citation type="submission" date="2008-10" db="EMBL/GenBank/DDBJ databases">
        <title>Genome sequence of Bacillus cereus B4264.</title>
        <authorList>
            <person name="Dodson R.J."/>
            <person name="Durkin A.S."/>
            <person name="Rosovitz M.J."/>
            <person name="Rasko D.A."/>
            <person name="Hoffmaster A."/>
            <person name="Ravel J."/>
            <person name="Sutton G."/>
        </authorList>
    </citation>
    <scope>NUCLEOTIDE SEQUENCE [LARGE SCALE GENOMIC DNA]</scope>
    <source>
        <strain>B4264</strain>
    </source>
</reference>
<organism>
    <name type="scientific">Bacillus cereus (strain B4264)</name>
    <dbReference type="NCBI Taxonomy" id="405532"/>
    <lineage>
        <taxon>Bacteria</taxon>
        <taxon>Bacillati</taxon>
        <taxon>Bacillota</taxon>
        <taxon>Bacilli</taxon>
        <taxon>Bacillales</taxon>
        <taxon>Bacillaceae</taxon>
        <taxon>Bacillus</taxon>
        <taxon>Bacillus cereus group</taxon>
    </lineage>
</organism>
<comment type="function">
    <text evidence="1">This protein binds to 23S rRNA in the presence of protein L20.</text>
</comment>
<comment type="subunit">
    <text evidence="1">Part of the 50S ribosomal subunit. Contacts protein L20.</text>
</comment>
<comment type="similarity">
    <text evidence="1">Belongs to the bacterial ribosomal protein bL21 family.</text>
</comment>
<dbReference type="EMBL" id="CP001176">
    <property type="protein sequence ID" value="ACK61021.1"/>
    <property type="molecule type" value="Genomic_DNA"/>
</dbReference>
<dbReference type="RefSeq" id="WP_000270907.1">
    <property type="nucleotide sequence ID" value="NZ_VEHB01000006.1"/>
</dbReference>
<dbReference type="SMR" id="B7HE77"/>
<dbReference type="GeneID" id="93006656"/>
<dbReference type="KEGG" id="bcb:BCB4264_A4562"/>
<dbReference type="HOGENOM" id="CLU_061463_3_2_9"/>
<dbReference type="Proteomes" id="UP000007096">
    <property type="component" value="Chromosome"/>
</dbReference>
<dbReference type="GO" id="GO:0005737">
    <property type="term" value="C:cytoplasm"/>
    <property type="evidence" value="ECO:0007669"/>
    <property type="project" value="UniProtKB-ARBA"/>
</dbReference>
<dbReference type="GO" id="GO:1990904">
    <property type="term" value="C:ribonucleoprotein complex"/>
    <property type="evidence" value="ECO:0007669"/>
    <property type="project" value="UniProtKB-KW"/>
</dbReference>
<dbReference type="GO" id="GO:0005840">
    <property type="term" value="C:ribosome"/>
    <property type="evidence" value="ECO:0007669"/>
    <property type="project" value="UniProtKB-KW"/>
</dbReference>
<dbReference type="GO" id="GO:0019843">
    <property type="term" value="F:rRNA binding"/>
    <property type="evidence" value="ECO:0007669"/>
    <property type="project" value="UniProtKB-UniRule"/>
</dbReference>
<dbReference type="GO" id="GO:0003735">
    <property type="term" value="F:structural constituent of ribosome"/>
    <property type="evidence" value="ECO:0007669"/>
    <property type="project" value="InterPro"/>
</dbReference>
<dbReference type="GO" id="GO:0006412">
    <property type="term" value="P:translation"/>
    <property type="evidence" value="ECO:0007669"/>
    <property type="project" value="UniProtKB-UniRule"/>
</dbReference>
<dbReference type="HAMAP" id="MF_01363">
    <property type="entry name" value="Ribosomal_bL21"/>
    <property type="match status" value="1"/>
</dbReference>
<dbReference type="InterPro" id="IPR028909">
    <property type="entry name" value="bL21-like"/>
</dbReference>
<dbReference type="InterPro" id="IPR036164">
    <property type="entry name" value="bL21-like_sf"/>
</dbReference>
<dbReference type="InterPro" id="IPR001787">
    <property type="entry name" value="Ribosomal_bL21"/>
</dbReference>
<dbReference type="InterPro" id="IPR018258">
    <property type="entry name" value="Ribosomal_bL21_CS"/>
</dbReference>
<dbReference type="NCBIfam" id="TIGR00061">
    <property type="entry name" value="L21"/>
    <property type="match status" value="1"/>
</dbReference>
<dbReference type="PANTHER" id="PTHR21349">
    <property type="entry name" value="50S RIBOSOMAL PROTEIN L21"/>
    <property type="match status" value="1"/>
</dbReference>
<dbReference type="PANTHER" id="PTHR21349:SF0">
    <property type="entry name" value="LARGE RIBOSOMAL SUBUNIT PROTEIN BL21M"/>
    <property type="match status" value="1"/>
</dbReference>
<dbReference type="Pfam" id="PF00829">
    <property type="entry name" value="Ribosomal_L21p"/>
    <property type="match status" value="1"/>
</dbReference>
<dbReference type="SUPFAM" id="SSF141091">
    <property type="entry name" value="L21p-like"/>
    <property type="match status" value="1"/>
</dbReference>
<dbReference type="PROSITE" id="PS01169">
    <property type="entry name" value="RIBOSOMAL_L21"/>
    <property type="match status" value="1"/>
</dbReference>
<accession>B7HE77</accession>
<gene>
    <name evidence="1" type="primary">rplU</name>
    <name type="ordered locus">BCB4264_A4562</name>
</gene>
<evidence type="ECO:0000255" key="1">
    <source>
        <dbReference type="HAMAP-Rule" id="MF_01363"/>
    </source>
</evidence>
<evidence type="ECO:0000305" key="2"/>
<proteinExistence type="inferred from homology"/>
<protein>
    <recommendedName>
        <fullName evidence="1">Large ribosomal subunit protein bL21</fullName>
    </recommendedName>
    <alternativeName>
        <fullName evidence="2">50S ribosomal protein L21</fullName>
    </alternativeName>
</protein>
<feature type="chain" id="PRO_1000143755" description="Large ribosomal subunit protein bL21">
    <location>
        <begin position="1"/>
        <end position="102"/>
    </location>
</feature>
<sequence length="102" mass="11191">MYAIIETGGKQIKVEAGQAIYIEKLDVEAGETVTFDKVLFVGGENVKVGSPVVEGATVTAKVEKQGRAKKIIVFKYKAKKNNRKKQGHRQPYTKLVVEAINA</sequence>
<name>RL21_BACC4</name>
<keyword id="KW-0687">Ribonucleoprotein</keyword>
<keyword id="KW-0689">Ribosomal protein</keyword>
<keyword id="KW-0694">RNA-binding</keyword>
<keyword id="KW-0699">rRNA-binding</keyword>